<evidence type="ECO:0000269" key="1">
    <source>
    </source>
</evidence>
<evidence type="ECO:0000303" key="2">
    <source>
    </source>
</evidence>
<evidence type="ECO:0000305" key="3"/>
<evidence type="ECO:0000305" key="4">
    <source>
    </source>
</evidence>
<evidence type="ECO:0000312" key="5">
    <source>
        <dbReference type="Araport" id="AT3G14120"/>
    </source>
</evidence>
<evidence type="ECO:0000312" key="6">
    <source>
        <dbReference type="EMBL" id="AAM98082.1"/>
    </source>
</evidence>
<evidence type="ECO:0000312" key="7">
    <source>
        <dbReference type="EMBL" id="BAB02976.1"/>
    </source>
</evidence>
<sequence>MDMDMDTSPSYFDPEALSVRDQFRRYRKRHSTSPHEEMLSSNVSENRLLYDGHNIHSPTNTALLLENIKEEVDNFHTDHYEGTPTNPISASRRESVGILNDDDEALFRRVESQSLKACKIENDELAESGDTTFALFASLFDSALQGLMSIPNLMLRLEESCRNVSQSIRYGSDIRHRAVEDKLMRQKAQLLLGEAASWSLLWNLYGKGTDEVPENLILIPSTSHLEACQFVLNDHTAQLCLRIVMWLEELASKSLDLERKVQGSHVGTYLPNAGVWHHTQRYLKKNGSNADTLHHLDFDAPTREHARLLPDDYKQDESVLEDVWTLIRAGRIEEACDLCRSAGQSWRAATLCPFSGMDMFPSIEALVKNGENRTLQAIEQESGFGNQLRLWKWASYCASEKIAEQDGGKHEVAVFATQCSNLNRMLPICTDWESACWAMAKSWLDVQVDLELAQSKPGLTERFKSCIDESPEATQNGCQASFGPEDWPLHVLNQQPRDLPALLQKLHSGEMVHEAVVRGCKEQHRQIQMNLMLGDISHLLDIIWSWIAPLEDDQSNFRPHGDPHMIKFGAHMVLVLRLLFTDEINDSFKEKLNNVGDLILHMYAMFLFSKQHEELVGIYASQLARHRCIELFVHMMELRMHSSVHVKYKIFLSAMEYLSFSPVDDLHGNFEEIVDRVLSRSREIKLAKYDPSIDVAEQHRQQSLQKAIAIQWLCFTPPSTIKDVKDVTSKLLLRSLMHSNILFREFALIAMWRVPATPVGAHTLLSYLAEPLKQLSENPDTLEDYVSENLQEFQDWNEYYSCDAKYRNWLKFQLENAEVTELSEEENQKAVVAAKETLDSSLSLLLRQDNPWMTFLEDHVFESEEYLFLELHATAMLCLPSGECLRPDATVCAALMSALYSSVSEEVVLDRQLMVNVSISSRDSYCIEVVLRCLAIKGDGLGPHNANDGGILSAVAAAGFKGSDIYGTYFSFTYDLPPFSIEIWGCELTRFQAGVTMDISRLDAWYSSKEGSLETPATYIVRGLCRRCCLPELVLRSMQVSVSLMESGNPPEDHDELIELVASDETGFLSLFSRQQLQEFMLFEREYRMSQLELQEELSSP</sequence>
<accession>Q8L748</accession>
<accession>F4JFR3</accession>
<accession>F4JFR5</accession>
<accession>Q84ME0</accession>
<accession>Q9LJH6</accession>
<protein>
    <recommendedName>
        <fullName evidence="2">Nuclear pore complex protein NUP107</fullName>
    </recommendedName>
    <alternativeName>
        <fullName>Nucleoporin 107</fullName>
    </alternativeName>
</protein>
<name>NU107_ARATH</name>
<dbReference type="EMBL" id="AP000600">
    <property type="protein sequence ID" value="BAB02976.1"/>
    <property type="status" value="ALT_SEQ"/>
    <property type="molecule type" value="Genomic_DNA"/>
</dbReference>
<dbReference type="EMBL" id="CP002686">
    <property type="protein sequence ID" value="AEE75472.1"/>
    <property type="molecule type" value="Genomic_DNA"/>
</dbReference>
<dbReference type="EMBL" id="CP002686">
    <property type="protein sequence ID" value="AEE75473.1"/>
    <property type="molecule type" value="Genomic_DNA"/>
</dbReference>
<dbReference type="EMBL" id="CP002686">
    <property type="protein sequence ID" value="AEE75474.1"/>
    <property type="molecule type" value="Genomic_DNA"/>
</dbReference>
<dbReference type="EMBL" id="AY139761">
    <property type="protein sequence ID" value="AAM98082.1"/>
    <property type="molecule type" value="mRNA"/>
</dbReference>
<dbReference type="EMBL" id="BT006367">
    <property type="protein sequence ID" value="AAP21175.1"/>
    <property type="molecule type" value="mRNA"/>
</dbReference>
<dbReference type="RefSeq" id="NP_001189889.1">
    <molecule id="Q8L748-2"/>
    <property type="nucleotide sequence ID" value="NM_001202960.1"/>
</dbReference>
<dbReference type="RefSeq" id="NP_188028.2">
    <molecule id="Q8L748-1"/>
    <property type="nucleotide sequence ID" value="NM_112268.3"/>
</dbReference>
<dbReference type="RefSeq" id="NP_850581.1">
    <molecule id="Q8L748-3"/>
    <property type="nucleotide sequence ID" value="NM_180250.3"/>
</dbReference>
<dbReference type="BioGRID" id="5963">
    <property type="interactions" value="16"/>
</dbReference>
<dbReference type="FunCoup" id="Q8L748">
    <property type="interactions" value="1249"/>
</dbReference>
<dbReference type="IntAct" id="Q8L748">
    <property type="interactions" value="1"/>
</dbReference>
<dbReference type="STRING" id="3702.Q8L748"/>
<dbReference type="iPTMnet" id="Q8L748"/>
<dbReference type="PaxDb" id="3702-AT3G14120.1"/>
<dbReference type="ProteomicsDB" id="248977">
    <molecule id="Q8L748-1"/>
</dbReference>
<dbReference type="EnsemblPlants" id="AT3G14120.1">
    <molecule id="Q8L748-1"/>
    <property type="protein sequence ID" value="AT3G14120.1"/>
    <property type="gene ID" value="AT3G14120"/>
</dbReference>
<dbReference type="EnsemblPlants" id="AT3G14120.2">
    <molecule id="Q8L748-3"/>
    <property type="protein sequence ID" value="AT3G14120.2"/>
    <property type="gene ID" value="AT3G14120"/>
</dbReference>
<dbReference type="EnsemblPlants" id="AT3G14120.3">
    <molecule id="Q8L748-2"/>
    <property type="protein sequence ID" value="AT3G14120.3"/>
    <property type="gene ID" value="AT3G14120"/>
</dbReference>
<dbReference type="GeneID" id="820629"/>
<dbReference type="Gramene" id="AT3G14120.1">
    <molecule id="Q8L748-1"/>
    <property type="protein sequence ID" value="AT3G14120.1"/>
    <property type="gene ID" value="AT3G14120"/>
</dbReference>
<dbReference type="Gramene" id="AT3G14120.2">
    <molecule id="Q8L748-3"/>
    <property type="protein sequence ID" value="AT3G14120.2"/>
    <property type="gene ID" value="AT3G14120"/>
</dbReference>
<dbReference type="Gramene" id="AT3G14120.3">
    <molecule id="Q8L748-2"/>
    <property type="protein sequence ID" value="AT3G14120.3"/>
    <property type="gene ID" value="AT3G14120"/>
</dbReference>
<dbReference type="KEGG" id="ath:AT3G14120"/>
<dbReference type="Araport" id="AT3G14120"/>
<dbReference type="TAIR" id="AT3G14120">
    <property type="gene designation" value="NUP107"/>
</dbReference>
<dbReference type="eggNOG" id="KOG1964">
    <property type="taxonomic scope" value="Eukaryota"/>
</dbReference>
<dbReference type="InParanoid" id="Q8L748"/>
<dbReference type="OMA" id="EEDMPHE"/>
<dbReference type="PhylomeDB" id="Q8L748"/>
<dbReference type="CD-CODE" id="4299E36E">
    <property type="entry name" value="Nucleolus"/>
</dbReference>
<dbReference type="PRO" id="PR:Q8L748"/>
<dbReference type="Proteomes" id="UP000006548">
    <property type="component" value="Chromosome 3"/>
</dbReference>
<dbReference type="ExpressionAtlas" id="Q8L748">
    <property type="expression patterns" value="baseline and differential"/>
</dbReference>
<dbReference type="GO" id="GO:0005635">
    <property type="term" value="C:nuclear envelope"/>
    <property type="evidence" value="ECO:0000314"/>
    <property type="project" value="TAIR"/>
</dbReference>
<dbReference type="GO" id="GO:0005643">
    <property type="term" value="C:nuclear pore"/>
    <property type="evidence" value="ECO:0007669"/>
    <property type="project" value="UniProtKB-SubCell"/>
</dbReference>
<dbReference type="GO" id="GO:0017056">
    <property type="term" value="F:structural constituent of nuclear pore"/>
    <property type="evidence" value="ECO:0007669"/>
    <property type="project" value="InterPro"/>
</dbReference>
<dbReference type="GO" id="GO:0051028">
    <property type="term" value="P:mRNA transport"/>
    <property type="evidence" value="ECO:0007669"/>
    <property type="project" value="UniProtKB-KW"/>
</dbReference>
<dbReference type="GO" id="GO:0015031">
    <property type="term" value="P:protein transport"/>
    <property type="evidence" value="ECO:0007669"/>
    <property type="project" value="UniProtKB-KW"/>
</dbReference>
<dbReference type="FunFam" id="1.20.190.50:FF:000006">
    <property type="entry name" value="Nuclear pore complex protein"/>
    <property type="match status" value="1"/>
</dbReference>
<dbReference type="Gene3D" id="1.10.3450.20">
    <property type="match status" value="1"/>
</dbReference>
<dbReference type="Gene3D" id="1.20.190.50">
    <property type="match status" value="2"/>
</dbReference>
<dbReference type="InterPro" id="IPR007252">
    <property type="entry name" value="Nup84/Nup107"/>
</dbReference>
<dbReference type="PANTHER" id="PTHR13003:SF2">
    <property type="entry name" value="NUCLEAR PORE COMPLEX PROTEIN NUP107"/>
    <property type="match status" value="1"/>
</dbReference>
<dbReference type="PANTHER" id="PTHR13003">
    <property type="entry name" value="NUP107-RELATED"/>
    <property type="match status" value="1"/>
</dbReference>
<dbReference type="Pfam" id="PF04121">
    <property type="entry name" value="Nup84_Nup100"/>
    <property type="match status" value="1"/>
</dbReference>
<keyword id="KW-0025">Alternative splicing</keyword>
<keyword id="KW-0509">mRNA transport</keyword>
<keyword id="KW-0906">Nuclear pore complex</keyword>
<keyword id="KW-0539">Nucleus</keyword>
<keyword id="KW-0653">Protein transport</keyword>
<keyword id="KW-1185">Reference proteome</keyword>
<keyword id="KW-0811">Translocation</keyword>
<keyword id="KW-0813">Transport</keyword>
<gene>
    <name evidence="2" type="primary">NUP107</name>
    <name evidence="5" type="ordered locus">At3g14120</name>
    <name evidence="7" type="ORF">MAG2.7</name>
</gene>
<comment type="subunit">
    <text evidence="4">Part of the nuclear pore complex (NPC). The NPC has an eight-fold symmetrical structure comprising a central transport channel and two rings, the cytoplasmic and nuclear rings, to which eight filaments are attached. The cytoplasmic filaments have loose ends, while the nuclear filaments are joined in a distal ring, forming a nuclear basket. NPCs are highly dynamic in configuration and composition, and can be devided in 3 subcomplexes, the NUP62 subcomplex, the NUP107-160 subcomplex and the NUP93 subcomplex, containing approximately 30 different nucleoporin proteins.</text>
</comment>
<comment type="subcellular location">
    <subcellularLocation>
        <location evidence="1">Nucleus envelope</location>
    </subcellularLocation>
    <subcellularLocation>
        <location evidence="4">Nucleus</location>
        <location evidence="4">Nuclear pore complex</location>
    </subcellularLocation>
</comment>
<comment type="alternative products">
    <event type="alternative splicing"/>
    <isoform>
        <id>Q8L748-1</id>
        <name>1</name>
        <sequence type="displayed"/>
    </isoform>
    <isoform>
        <id>Q8L748-2</id>
        <name>2</name>
        <sequence type="described" ref="VSP_057122 VSP_057123"/>
    </isoform>
    <isoform>
        <id>Q8L748-3</id>
        <name>3</name>
        <sequence type="described" ref="VSP_057123"/>
    </isoform>
</comment>
<comment type="similarity">
    <text evidence="3">Belongs to the nucleoporin Nup84/Nup107 family.</text>
</comment>
<comment type="sequence caution" evidence="3">
    <conflict type="erroneous gene model prediction">
        <sequence resource="EMBL-CDS" id="BAB02976"/>
    </conflict>
</comment>
<reference key="1">
    <citation type="journal article" date="2000" name="DNA Res.">
        <title>Structural analysis of Arabidopsis thaliana chromosome 3. II. Sequence features of the 4,251,695 bp regions covered by 90 P1, TAC and BAC clones.</title>
        <authorList>
            <person name="Kaneko T."/>
            <person name="Katoh T."/>
            <person name="Sato S."/>
            <person name="Nakamura Y."/>
            <person name="Asamizu E."/>
            <person name="Tabata S."/>
        </authorList>
    </citation>
    <scope>NUCLEOTIDE SEQUENCE [LARGE SCALE GENOMIC DNA]</scope>
    <source>
        <strain>cv. Columbia</strain>
    </source>
</reference>
<reference key="2">
    <citation type="journal article" date="2017" name="Plant J.">
        <title>Araport11: a complete reannotation of the Arabidopsis thaliana reference genome.</title>
        <authorList>
            <person name="Cheng C.Y."/>
            <person name="Krishnakumar V."/>
            <person name="Chan A.P."/>
            <person name="Thibaud-Nissen F."/>
            <person name="Schobel S."/>
            <person name="Town C.D."/>
        </authorList>
    </citation>
    <scope>GENOME REANNOTATION</scope>
    <source>
        <strain>cv. Columbia</strain>
    </source>
</reference>
<reference key="3">
    <citation type="journal article" date="2003" name="Science">
        <title>Empirical analysis of transcriptional activity in the Arabidopsis genome.</title>
        <authorList>
            <person name="Yamada K."/>
            <person name="Lim J."/>
            <person name="Dale J.M."/>
            <person name="Chen H."/>
            <person name="Shinn P."/>
            <person name="Palm C.J."/>
            <person name="Southwick A.M."/>
            <person name="Wu H.C."/>
            <person name="Kim C.J."/>
            <person name="Nguyen M."/>
            <person name="Pham P.K."/>
            <person name="Cheuk R.F."/>
            <person name="Karlin-Newmann G."/>
            <person name="Liu S.X."/>
            <person name="Lam B."/>
            <person name="Sakano H."/>
            <person name="Wu T."/>
            <person name="Yu G."/>
            <person name="Miranda M."/>
            <person name="Quach H.L."/>
            <person name="Tripp M."/>
            <person name="Chang C.H."/>
            <person name="Lee J.M."/>
            <person name="Toriumi M.J."/>
            <person name="Chan M.M."/>
            <person name="Tang C.C."/>
            <person name="Onodera C.S."/>
            <person name="Deng J.M."/>
            <person name="Akiyama K."/>
            <person name="Ansari Y."/>
            <person name="Arakawa T."/>
            <person name="Banh J."/>
            <person name="Banno F."/>
            <person name="Bowser L."/>
            <person name="Brooks S.Y."/>
            <person name="Carninci P."/>
            <person name="Chao Q."/>
            <person name="Choy N."/>
            <person name="Enju A."/>
            <person name="Goldsmith A.D."/>
            <person name="Gurjal M."/>
            <person name="Hansen N.F."/>
            <person name="Hayashizaki Y."/>
            <person name="Johnson-Hopson C."/>
            <person name="Hsuan V.W."/>
            <person name="Iida K."/>
            <person name="Karnes M."/>
            <person name="Khan S."/>
            <person name="Koesema E."/>
            <person name="Ishida J."/>
            <person name="Jiang P.X."/>
            <person name="Jones T."/>
            <person name="Kawai J."/>
            <person name="Kamiya A."/>
            <person name="Meyers C."/>
            <person name="Nakajima M."/>
            <person name="Narusaka M."/>
            <person name="Seki M."/>
            <person name="Sakurai T."/>
            <person name="Satou M."/>
            <person name="Tamse R."/>
            <person name="Vaysberg M."/>
            <person name="Wallender E.K."/>
            <person name="Wong C."/>
            <person name="Yamamura Y."/>
            <person name="Yuan S."/>
            <person name="Shinozaki K."/>
            <person name="Davis R.W."/>
            <person name="Theologis A."/>
            <person name="Ecker J.R."/>
        </authorList>
    </citation>
    <scope>NUCLEOTIDE SEQUENCE [LARGE SCALE MRNA] (ISOFORMS 1 AND 3)</scope>
    <source>
        <strain>cv. Columbia</strain>
    </source>
</reference>
<reference key="4">
    <citation type="journal article" date="2010" name="Plant Cell">
        <title>Identification and characterization of nuclear pore complex components in Arabidopsis thaliana.</title>
        <authorList>
            <person name="Tamura K."/>
            <person name="Fukao Y."/>
            <person name="Iwamoto M."/>
            <person name="Haraguchi T."/>
            <person name="Hara-Nishimura I."/>
        </authorList>
    </citation>
    <scope>IDENTIFICATION IN THE NUCLEAR PORE COMPLEX BY MASS SPECTROMETRY</scope>
    <scope>SUBCELLULAR LOCATION</scope>
    <scope>NOMENCLATURE</scope>
</reference>
<proteinExistence type="evidence at protein level"/>
<feature type="chain" id="PRO_0000431075" description="Nuclear pore complex protein NUP107">
    <location>
        <begin position="1"/>
        <end position="1101"/>
    </location>
</feature>
<feature type="splice variant" id="VSP_057122" description="In isoform 2.">
    <original>K</original>
    <variation>KCSSFNFHKQKLSKTVVAFSFL</variation>
    <location>
        <position position="260"/>
    </location>
</feature>
<feature type="splice variant" id="VSP_057123" description="In isoform 2 and isoform 3.">
    <location>
        <begin position="963"/>
        <end position="986"/>
    </location>
</feature>
<feature type="sequence conflict" description="In Ref. 3; AAP21175." ref="3">
    <original>E</original>
    <variation>D</variation>
    <location>
        <position position="987"/>
    </location>
</feature>
<organism evidence="6">
    <name type="scientific">Arabidopsis thaliana</name>
    <name type="common">Mouse-ear cress</name>
    <dbReference type="NCBI Taxonomy" id="3702"/>
    <lineage>
        <taxon>Eukaryota</taxon>
        <taxon>Viridiplantae</taxon>
        <taxon>Streptophyta</taxon>
        <taxon>Embryophyta</taxon>
        <taxon>Tracheophyta</taxon>
        <taxon>Spermatophyta</taxon>
        <taxon>Magnoliopsida</taxon>
        <taxon>eudicotyledons</taxon>
        <taxon>Gunneridae</taxon>
        <taxon>Pentapetalae</taxon>
        <taxon>rosids</taxon>
        <taxon>malvids</taxon>
        <taxon>Brassicales</taxon>
        <taxon>Brassicaceae</taxon>
        <taxon>Camelineae</taxon>
        <taxon>Arabidopsis</taxon>
    </lineage>
</organism>